<evidence type="ECO:0000250" key="1"/>
<evidence type="ECO:0000305" key="2"/>
<proteinExistence type="inferred from homology"/>
<protein>
    <recommendedName>
        <fullName>Mitochondrial morphogenesis protein SLD7</fullName>
    </recommendedName>
    <alternativeName>
        <fullName>Synthetic lethality with DPB11-24 mutation protein 7</fullName>
    </alternativeName>
</protein>
<comment type="function">
    <text evidence="1">Required for the proper function of SLD3 at the initiation of DNA replication. Binds to SLD3 and reduces its affinity for CDC45, a component of the replication fork. Required for mitochondrial morphology (By similarity).</text>
</comment>
<comment type="subunit">
    <text evidence="1">Interacts with SLD3.</text>
</comment>
<comment type="subcellular location">
    <subcellularLocation>
        <location evidence="1">Nucleus</location>
    </subcellularLocation>
    <subcellularLocation>
        <location evidence="1">Cytoplasm</location>
        <location evidence="1">Cytoskeleton</location>
        <location evidence="1">Spindle pole</location>
    </subcellularLocation>
</comment>
<comment type="similarity">
    <text evidence="2">Belongs to the SLD7 family.</text>
</comment>
<dbReference type="EMBL" id="ADVS01000045">
    <property type="protein sequence ID" value="EGA72865.1"/>
    <property type="molecule type" value="Genomic_DNA"/>
</dbReference>
<dbReference type="SMR" id="E7KIF0"/>
<dbReference type="HOGENOM" id="CLU_1079954_0_0_1"/>
<dbReference type="OMA" id="EFTHRDE"/>
<dbReference type="OrthoDB" id="4063051at2759"/>
<dbReference type="GO" id="GO:0005737">
    <property type="term" value="C:cytoplasm"/>
    <property type="evidence" value="ECO:0007669"/>
    <property type="project" value="UniProtKB-KW"/>
</dbReference>
<dbReference type="GO" id="GO:0005634">
    <property type="term" value="C:nucleus"/>
    <property type="evidence" value="ECO:0007669"/>
    <property type="project" value="UniProtKB-SubCell"/>
</dbReference>
<dbReference type="GO" id="GO:0000922">
    <property type="term" value="C:spindle pole"/>
    <property type="evidence" value="ECO:0007669"/>
    <property type="project" value="UniProtKB-SubCell"/>
</dbReference>
<dbReference type="GO" id="GO:0006260">
    <property type="term" value="P:DNA replication"/>
    <property type="evidence" value="ECO:0007669"/>
    <property type="project" value="UniProtKB-KW"/>
</dbReference>
<dbReference type="GO" id="GO:0030174">
    <property type="term" value="P:regulation of DNA-templated DNA replication initiation"/>
    <property type="evidence" value="ECO:0007669"/>
    <property type="project" value="InterPro"/>
</dbReference>
<dbReference type="InterPro" id="IPR016808">
    <property type="entry name" value="Sld7"/>
</dbReference>
<dbReference type="InterPro" id="IPR041260">
    <property type="entry name" value="Sld7_C"/>
</dbReference>
<dbReference type="InterPro" id="IPR041564">
    <property type="entry name" value="Sld7_N"/>
</dbReference>
<dbReference type="Pfam" id="PF18596">
    <property type="entry name" value="Sld7_C"/>
    <property type="match status" value="1"/>
</dbReference>
<dbReference type="Pfam" id="PF18636">
    <property type="entry name" value="Sld7_N"/>
    <property type="match status" value="1"/>
</dbReference>
<dbReference type="PIRSF" id="PIRSF022788">
    <property type="entry name" value="UCP022788"/>
    <property type="match status" value="1"/>
</dbReference>
<gene>
    <name type="primary">SLD7</name>
    <name type="ORF">AWRI796_4462</name>
</gene>
<name>SLD7_YEASA</name>
<sequence length="257" mass="29510">MSRKLCTLNFTLSGKQGSLVIRDIQLWSNRPTASKSTSELRGQFIQYVDLAKLPLWVRSTNMNTYRCYSTSATAQAYFKSKLRNANRGIVIELSDKVDQRSQEPAYLIIFRENTELNCFQVDLTMKHEFDGQVTKLKQEIGKTRASVSKEGSIDIIIQQSQQRKIGTKTKVYRNVHINDKRLQFNETLSKLILGGLRLRGISNSITDYQKLYKITFDAAEFTHRDELKRISMGSGEEVSFESLQETVETLLKLFTKS</sequence>
<keyword id="KW-0131">Cell cycle</keyword>
<keyword id="KW-0963">Cytoplasm</keyword>
<keyword id="KW-0206">Cytoskeleton</keyword>
<keyword id="KW-0235">DNA replication</keyword>
<keyword id="KW-0539">Nucleus</keyword>
<reference key="1">
    <citation type="journal article" date="2011" name="PLoS Genet.">
        <title>Whole-genome comparison reveals novel genetic elements that characterize the genome of industrial strains of Saccharomyces cerevisiae.</title>
        <authorList>
            <person name="Borneman A.R."/>
            <person name="Desany B.A."/>
            <person name="Riches D."/>
            <person name="Affourtit J.P."/>
            <person name="Forgan A.H."/>
            <person name="Pretorius I.S."/>
            <person name="Egholm M."/>
            <person name="Chambers P.J."/>
        </authorList>
    </citation>
    <scope>NUCLEOTIDE SEQUENCE [LARGE SCALE GENOMIC DNA]</scope>
    <source>
        <strain>AWRI796</strain>
    </source>
</reference>
<accession>E7KIF0</accession>
<feature type="chain" id="PRO_0000411034" description="Mitochondrial morphogenesis protein SLD7">
    <location>
        <begin position="1"/>
        <end position="257"/>
    </location>
</feature>
<organism>
    <name type="scientific">Saccharomyces cerevisiae (strain AWRI796)</name>
    <name type="common">Baker's yeast</name>
    <dbReference type="NCBI Taxonomy" id="764097"/>
    <lineage>
        <taxon>Eukaryota</taxon>
        <taxon>Fungi</taxon>
        <taxon>Dikarya</taxon>
        <taxon>Ascomycota</taxon>
        <taxon>Saccharomycotina</taxon>
        <taxon>Saccharomycetes</taxon>
        <taxon>Saccharomycetales</taxon>
        <taxon>Saccharomycetaceae</taxon>
        <taxon>Saccharomyces</taxon>
    </lineage>
</organism>